<accession>Q96FM1</accession>
<accession>B4DGK7</accession>
<accession>Q86Z03</accession>
<accession>Q8NBJ8</accession>
<organism>
    <name type="scientific">Homo sapiens</name>
    <name type="common">Human</name>
    <dbReference type="NCBI Taxonomy" id="9606"/>
    <lineage>
        <taxon>Eukaryota</taxon>
        <taxon>Metazoa</taxon>
        <taxon>Chordata</taxon>
        <taxon>Craniata</taxon>
        <taxon>Vertebrata</taxon>
        <taxon>Euteleostomi</taxon>
        <taxon>Mammalia</taxon>
        <taxon>Eutheria</taxon>
        <taxon>Euarchontoglires</taxon>
        <taxon>Primates</taxon>
        <taxon>Haplorrhini</taxon>
        <taxon>Catarrhini</taxon>
        <taxon>Hominidae</taxon>
        <taxon>Homo</taxon>
    </lineage>
</organism>
<sequence>MAGLAARLVLLAGAAALASGSQGDREPVYRDCVLQCEEQNCSGGALNHFRSRQPIYMSLAGWTCRDDCKYECMWVTVGLYLQEGHKVPQFHGKWPFSRFLFFQEPASAVASFLNGLASLVMLCRYRTFVPASSPMYHTCVAFAWVSLNAWFWSTVFHTRDTDLTEKMDYFCASTVILHSIYLCCVRTVGLQHPAVVSAFRALLLLMLTVHVSYLSLIRFDYGYNLVANVAIGLVNVVWWLAWCLWNQRRLPHVRKCVVVVLLLQGLSLLELLDFPPLFWVLDAHAIWHISTIPVHVLFFSFLEDDSLYLLKESEDKFKLD</sequence>
<feature type="signal peptide" evidence="2">
    <location>
        <begin position="1"/>
        <end position="20"/>
    </location>
</feature>
<feature type="chain" id="PRO_0000339356" description="GPI-specific phospholipase A2-like PGAP3">
    <location>
        <begin position="21"/>
        <end position="320"/>
    </location>
</feature>
<feature type="topological domain" description="Lumenal" evidence="2">
    <location>
        <begin position="21"/>
        <end position="98"/>
    </location>
</feature>
<feature type="transmembrane region" description="Helical" evidence="2">
    <location>
        <begin position="99"/>
        <end position="119"/>
    </location>
</feature>
<feature type="topological domain" description="Cytoplasmic" evidence="2">
    <location>
        <begin position="120"/>
        <end position="135"/>
    </location>
</feature>
<feature type="transmembrane region" description="Helical" evidence="2">
    <location>
        <begin position="136"/>
        <end position="156"/>
    </location>
</feature>
<feature type="topological domain" description="Lumenal" evidence="2">
    <location>
        <begin position="157"/>
        <end position="169"/>
    </location>
</feature>
<feature type="transmembrane region" description="Helical" evidence="2">
    <location>
        <begin position="170"/>
        <end position="190"/>
    </location>
</feature>
<feature type="topological domain" description="Cytoplasmic" evidence="2">
    <location>
        <begin position="191"/>
        <end position="193"/>
    </location>
</feature>
<feature type="transmembrane region" description="Helical" evidence="2">
    <location>
        <begin position="194"/>
        <end position="214"/>
    </location>
</feature>
<feature type="topological domain" description="Lumenal" evidence="2">
    <location>
        <begin position="215"/>
        <end position="224"/>
    </location>
</feature>
<feature type="transmembrane region" description="Helical" evidence="2">
    <location>
        <begin position="225"/>
        <end position="245"/>
    </location>
</feature>
<feature type="topological domain" description="Cytoplasmic" evidence="2">
    <location>
        <begin position="246"/>
        <end position="257"/>
    </location>
</feature>
<feature type="transmembrane region" description="Helical" evidence="2">
    <location>
        <begin position="258"/>
        <end position="278"/>
    </location>
</feature>
<feature type="topological domain" description="Lumenal" evidence="2">
    <location>
        <position position="279"/>
    </location>
</feature>
<feature type="transmembrane region" description="Helical" evidence="2">
    <location>
        <begin position="280"/>
        <end position="299"/>
    </location>
</feature>
<feature type="topological domain" description="Cytoplasmic" evidence="2">
    <location>
        <begin position="300"/>
        <end position="320"/>
    </location>
</feature>
<feature type="glycosylation site" description="N-linked (GlcNAc...) asparagine" evidence="2">
    <location>
        <position position="40"/>
    </location>
</feature>
<feature type="splice variant" id="VSP_034158" description="In isoform 2." evidence="8">
    <location>
        <begin position="94"/>
        <end position="144"/>
    </location>
</feature>
<feature type="splice variant" id="VSP_057229" description="In isoform 3." evidence="7">
    <location>
        <begin position="145"/>
        <end position="165"/>
    </location>
</feature>
<feature type="sequence variant" id="VAR_071155" description="In HPMRS4; results in loss of function; the mutant localizes to the Golgi apparatus as the wild-type; dbSNP:rs587777251." evidence="5">
    <original>G</original>
    <variation>D</variation>
    <location>
        <position position="92"/>
    </location>
</feature>
<feature type="sequence variant" id="VAR_071156" description="In HPMRS4; results in partial functional impairment; the mutant does not localize to the Golgi apparatus but is retained in the endoplasmic reticulum; dbSNP:rs371549948." evidence="5">
    <original>P</original>
    <variation>R</variation>
    <location>
        <position position="105"/>
    </location>
</feature>
<feature type="sequence variant" id="VAR_084138" description="Found in a patient with Toriello-Carey syndrome; uncertain significance; dbSNP:rs759541820." evidence="6">
    <original>H</original>
    <variation>Y</variation>
    <location>
        <position position="284"/>
    </location>
</feature>
<feature type="sequence variant" id="VAR_071157" description="In HPMRS4; results in partial functional impairment; the mutant does not localize to the Golgi apparatus but is retained in the endoplasmic reticulum; dbSNP:rs587777252." evidence="5">
    <original>D</original>
    <variation>G</variation>
    <location>
        <position position="305"/>
    </location>
</feature>
<feature type="sequence conflict" description="In Ref. 4; BAC11642." evidence="9" ref="4">
    <original>S</original>
    <variation>P</variation>
    <location>
        <position position="153"/>
    </location>
</feature>
<feature type="sequence conflict" description="In Ref. 4; BAC11642." evidence="9" ref="4">
    <original>C</original>
    <variation>R</variation>
    <location>
        <position position="256"/>
    </location>
</feature>
<dbReference type="EC" id="3.1.1.-" evidence="12"/>
<dbReference type="EMBL" id="AB088396">
    <property type="protein sequence ID" value="BAC55580.1"/>
    <property type="status" value="ALT_FRAME"/>
    <property type="molecule type" value="mRNA"/>
</dbReference>
<dbReference type="EMBL" id="AY358437">
    <property type="protein sequence ID" value="AAQ88803.1"/>
    <property type="molecule type" value="mRNA"/>
</dbReference>
<dbReference type="EMBL" id="AK294639">
    <property type="protein sequence ID" value="BAG57818.1"/>
    <property type="molecule type" value="mRNA"/>
</dbReference>
<dbReference type="EMBL" id="AK075474">
    <property type="protein sequence ID" value="BAC11642.1"/>
    <property type="molecule type" value="mRNA"/>
</dbReference>
<dbReference type="EMBL" id="AC087491">
    <property type="status" value="NOT_ANNOTATED_CDS"/>
    <property type="molecule type" value="Genomic_DNA"/>
</dbReference>
<dbReference type="EMBL" id="CH471152">
    <property type="protein sequence ID" value="EAW60592.1"/>
    <property type="molecule type" value="Genomic_DNA"/>
</dbReference>
<dbReference type="EMBL" id="BC010652">
    <property type="protein sequence ID" value="AAH10652.2"/>
    <property type="molecule type" value="mRNA"/>
</dbReference>
<dbReference type="CCDS" id="CCDS32641.1">
    <molecule id="Q96FM1-1"/>
</dbReference>
<dbReference type="CCDS" id="CCDS77013.1">
    <molecule id="Q96FM1-2"/>
</dbReference>
<dbReference type="CCDS" id="CCDS77015.1">
    <molecule id="Q96FM1-3"/>
</dbReference>
<dbReference type="RefSeq" id="NP_001278655.1">
    <molecule id="Q96FM1-2"/>
    <property type="nucleotide sequence ID" value="NM_001291726.2"/>
</dbReference>
<dbReference type="RefSeq" id="NP_001278657.1">
    <molecule id="Q96FM1-3"/>
    <property type="nucleotide sequence ID" value="NM_001291728.2"/>
</dbReference>
<dbReference type="RefSeq" id="NP_001278659.1">
    <property type="nucleotide sequence ID" value="NM_001291730.1"/>
</dbReference>
<dbReference type="RefSeq" id="NP_001278661.1">
    <property type="nucleotide sequence ID" value="NM_001291732.1"/>
</dbReference>
<dbReference type="RefSeq" id="NP_001278662.1">
    <property type="nucleotide sequence ID" value="NM_001291733.1"/>
</dbReference>
<dbReference type="RefSeq" id="NP_219487.3">
    <molecule id="Q96FM1-1"/>
    <property type="nucleotide sequence ID" value="NM_033419.4"/>
</dbReference>
<dbReference type="BioGRID" id="125014">
    <property type="interactions" value="11"/>
</dbReference>
<dbReference type="FunCoup" id="Q96FM1">
    <property type="interactions" value="422"/>
</dbReference>
<dbReference type="IntAct" id="Q96FM1">
    <property type="interactions" value="7"/>
</dbReference>
<dbReference type="STRING" id="9606.ENSP00000300658"/>
<dbReference type="GlyConnect" id="1621">
    <property type="glycosylation" value="1 N-Linked glycan (1 site)"/>
</dbReference>
<dbReference type="GlyCosmos" id="Q96FM1">
    <property type="glycosylation" value="1 site, 1 glycan"/>
</dbReference>
<dbReference type="GlyGen" id="Q96FM1">
    <property type="glycosylation" value="1 site, 7 N-linked glycans (1 site)"/>
</dbReference>
<dbReference type="iPTMnet" id="Q96FM1"/>
<dbReference type="BioMuta" id="PGAP3"/>
<dbReference type="DMDM" id="74731724"/>
<dbReference type="jPOST" id="Q96FM1"/>
<dbReference type="MassIVE" id="Q96FM1"/>
<dbReference type="PaxDb" id="9606-ENSP00000300658"/>
<dbReference type="PeptideAtlas" id="Q96FM1"/>
<dbReference type="ProteomicsDB" id="4141"/>
<dbReference type="ProteomicsDB" id="76544">
    <molecule id="Q96FM1-1"/>
</dbReference>
<dbReference type="ProteomicsDB" id="76545">
    <molecule id="Q96FM1-2"/>
</dbReference>
<dbReference type="Antibodypedia" id="16261">
    <property type="antibodies" value="187 antibodies from 24 providers"/>
</dbReference>
<dbReference type="DNASU" id="93210"/>
<dbReference type="Ensembl" id="ENST00000300658.9">
    <molecule id="Q96FM1-1"/>
    <property type="protein sequence ID" value="ENSP00000300658.4"/>
    <property type="gene ID" value="ENSG00000161395.14"/>
</dbReference>
<dbReference type="Ensembl" id="ENST00000378011.8">
    <molecule id="Q96FM1-2"/>
    <property type="protein sequence ID" value="ENSP00000367250.4"/>
    <property type="gene ID" value="ENSG00000161395.14"/>
</dbReference>
<dbReference type="Ensembl" id="ENST00000429199.6">
    <molecule id="Q96FM1-3"/>
    <property type="protein sequence ID" value="ENSP00000415765.2"/>
    <property type="gene ID" value="ENSG00000161395.14"/>
</dbReference>
<dbReference type="GeneID" id="93210"/>
<dbReference type="KEGG" id="hsa:93210"/>
<dbReference type="MANE-Select" id="ENST00000300658.9">
    <property type="protein sequence ID" value="ENSP00000300658.4"/>
    <property type="RefSeq nucleotide sequence ID" value="NM_033419.5"/>
    <property type="RefSeq protein sequence ID" value="NP_219487.3"/>
</dbReference>
<dbReference type="UCSC" id="uc002hsj.4">
    <molecule id="Q96FM1-1"/>
    <property type="organism name" value="human"/>
</dbReference>
<dbReference type="AGR" id="HGNC:23719"/>
<dbReference type="CTD" id="93210"/>
<dbReference type="DisGeNET" id="93210"/>
<dbReference type="GeneCards" id="PGAP3"/>
<dbReference type="HGNC" id="HGNC:23719">
    <property type="gene designation" value="PGAP3"/>
</dbReference>
<dbReference type="HPA" id="ENSG00000161395">
    <property type="expression patterns" value="Low tissue specificity"/>
</dbReference>
<dbReference type="MalaCards" id="PGAP3"/>
<dbReference type="MIM" id="611801">
    <property type="type" value="gene"/>
</dbReference>
<dbReference type="MIM" id="615716">
    <property type="type" value="phenotype"/>
</dbReference>
<dbReference type="neXtProt" id="NX_Q96FM1"/>
<dbReference type="OpenTargets" id="ENSG00000161395"/>
<dbReference type="Orphanet" id="247262">
    <property type="disease" value="Hyperphosphatasia-intellectual disability syndrome"/>
</dbReference>
<dbReference type="PharmGKB" id="PA165432310"/>
<dbReference type="VEuPathDB" id="HostDB:ENSG00000161395"/>
<dbReference type="eggNOG" id="KOG2970">
    <property type="taxonomic scope" value="Eukaryota"/>
</dbReference>
<dbReference type="GeneTree" id="ENSGT00390000001304"/>
<dbReference type="HOGENOM" id="CLU_032917_1_0_1"/>
<dbReference type="InParanoid" id="Q96FM1"/>
<dbReference type="OMA" id="DFMIEDC"/>
<dbReference type="OrthoDB" id="419770at2759"/>
<dbReference type="PAN-GO" id="Q96FM1">
    <property type="GO annotations" value="3 GO annotations based on evolutionary models"/>
</dbReference>
<dbReference type="PhylomeDB" id="Q96FM1"/>
<dbReference type="TreeFam" id="TF300031"/>
<dbReference type="PathwayCommons" id="Q96FM1"/>
<dbReference type="SignaLink" id="Q96FM1"/>
<dbReference type="BioGRID-ORCS" id="93210">
    <property type="hits" value="17 hits in 1159 CRISPR screens"/>
</dbReference>
<dbReference type="ChiTaRS" id="PGAP3">
    <property type="organism name" value="human"/>
</dbReference>
<dbReference type="GenomeRNAi" id="93210"/>
<dbReference type="Pharos" id="Q96FM1">
    <property type="development level" value="Tbio"/>
</dbReference>
<dbReference type="PRO" id="PR:Q96FM1"/>
<dbReference type="Proteomes" id="UP000005640">
    <property type="component" value="Chromosome 17"/>
</dbReference>
<dbReference type="RNAct" id="Q96FM1">
    <property type="molecule type" value="protein"/>
</dbReference>
<dbReference type="Bgee" id="ENSG00000161395">
    <property type="expression patterns" value="Expressed in pancreatic ductal cell and 187 other cell types or tissues"/>
</dbReference>
<dbReference type="ExpressionAtlas" id="Q96FM1">
    <property type="expression patterns" value="baseline and differential"/>
</dbReference>
<dbReference type="GO" id="GO:0005789">
    <property type="term" value="C:endoplasmic reticulum membrane"/>
    <property type="evidence" value="ECO:0000314"/>
    <property type="project" value="UniProtKB"/>
</dbReference>
<dbReference type="GO" id="GO:0000139">
    <property type="term" value="C:Golgi membrane"/>
    <property type="evidence" value="ECO:0007669"/>
    <property type="project" value="UniProtKB-SubCell"/>
</dbReference>
<dbReference type="GO" id="GO:0016788">
    <property type="term" value="F:hydrolase activity, acting on ester bonds"/>
    <property type="evidence" value="ECO:0000315"/>
    <property type="project" value="UniProtKB"/>
</dbReference>
<dbReference type="GO" id="GO:0006506">
    <property type="term" value="P:GPI anchor biosynthetic process"/>
    <property type="evidence" value="ECO:0000315"/>
    <property type="project" value="UniProtKB"/>
</dbReference>
<dbReference type="GO" id="GO:0006505">
    <property type="term" value="P:GPI anchor metabolic process"/>
    <property type="evidence" value="ECO:0000315"/>
    <property type="project" value="UniProtKB"/>
</dbReference>
<dbReference type="InterPro" id="IPR007217">
    <property type="entry name" value="Per1-like"/>
</dbReference>
<dbReference type="PANTHER" id="PTHR13148">
    <property type="entry name" value="PER1-RELATED"/>
    <property type="match status" value="1"/>
</dbReference>
<dbReference type="PANTHER" id="PTHR13148:SF0">
    <property type="entry name" value="POST-GPI ATTACHMENT TO PROTEINS FACTOR 3"/>
    <property type="match status" value="1"/>
</dbReference>
<dbReference type="Pfam" id="PF04080">
    <property type="entry name" value="Per1"/>
    <property type="match status" value="1"/>
</dbReference>
<gene>
    <name evidence="13" type="primary">PGAP3</name>
    <name type="synonym">CAB2</name>
    <name type="synonym">PERLD1</name>
    <name type="ORF">UNQ546/PRO1100</name>
</gene>
<name>PGAP3_HUMAN</name>
<reference key="1">
    <citation type="journal article" date="2002" name="Jpn. J. Cancer Res.">
        <title>Identification of the CAB2/hCOS16 gene required for the repair of DNA double-strand breaks on a core amplified region of the 17q12 locus in breast and gastric cancers.</title>
        <authorList>
            <person name="Nezu M."/>
            <person name="Nishigaki M."/>
            <person name="Ishizuka T."/>
            <person name="Kuwahara Y."/>
            <person name="Tanabe C."/>
            <person name="Aoyagi K."/>
            <person name="Sakamoto H."/>
            <person name="Saito Y."/>
            <person name="Yoshida T."/>
            <person name="Sasaki H."/>
            <person name="Terada M."/>
        </authorList>
    </citation>
    <scope>NUCLEOTIDE SEQUENCE [MRNA] (ISOFORM 1)</scope>
    <scope>SUBCELLULAR LOCATION</scope>
    <scope>TISSUE SPECIFICITY</scope>
</reference>
<reference key="2">
    <citation type="journal article" date="2003" name="Genome Res.">
        <title>The secreted protein discovery initiative (SPDI), a large-scale effort to identify novel human secreted and transmembrane proteins: a bioinformatics assessment.</title>
        <authorList>
            <person name="Clark H.F."/>
            <person name="Gurney A.L."/>
            <person name="Abaya E."/>
            <person name="Baker K."/>
            <person name="Baldwin D.T."/>
            <person name="Brush J."/>
            <person name="Chen J."/>
            <person name="Chow B."/>
            <person name="Chui C."/>
            <person name="Crowley C."/>
            <person name="Currell B."/>
            <person name="Deuel B."/>
            <person name="Dowd P."/>
            <person name="Eaton D."/>
            <person name="Foster J.S."/>
            <person name="Grimaldi C."/>
            <person name="Gu Q."/>
            <person name="Hass P.E."/>
            <person name="Heldens S."/>
            <person name="Huang A."/>
            <person name="Kim H.S."/>
            <person name="Klimowski L."/>
            <person name="Jin Y."/>
            <person name="Johnson S."/>
            <person name="Lee J."/>
            <person name="Lewis L."/>
            <person name="Liao D."/>
            <person name="Mark M.R."/>
            <person name="Robbie E."/>
            <person name="Sanchez C."/>
            <person name="Schoenfeld J."/>
            <person name="Seshagiri S."/>
            <person name="Simmons L."/>
            <person name="Singh J."/>
            <person name="Smith V."/>
            <person name="Stinson J."/>
            <person name="Vagts A."/>
            <person name="Vandlen R.L."/>
            <person name="Watanabe C."/>
            <person name="Wieand D."/>
            <person name="Woods K."/>
            <person name="Xie M.-H."/>
            <person name="Yansura D.G."/>
            <person name="Yi S."/>
            <person name="Yu G."/>
            <person name="Yuan J."/>
            <person name="Zhang M."/>
            <person name="Zhang Z."/>
            <person name="Goddard A.D."/>
            <person name="Wood W.I."/>
            <person name="Godowski P.J."/>
            <person name="Gray A.M."/>
        </authorList>
    </citation>
    <scope>NUCLEOTIDE SEQUENCE [LARGE SCALE MRNA] (ISOFORM 1)</scope>
</reference>
<reference key="3">
    <citation type="journal article" date="2004" name="Nat. Genet.">
        <title>Complete sequencing and characterization of 21,243 full-length human cDNAs.</title>
        <authorList>
            <person name="Ota T."/>
            <person name="Suzuki Y."/>
            <person name="Nishikawa T."/>
            <person name="Otsuki T."/>
            <person name="Sugiyama T."/>
            <person name="Irie R."/>
            <person name="Wakamatsu A."/>
            <person name="Hayashi K."/>
            <person name="Sato H."/>
            <person name="Nagai K."/>
            <person name="Kimura K."/>
            <person name="Makita H."/>
            <person name="Sekine M."/>
            <person name="Obayashi M."/>
            <person name="Nishi T."/>
            <person name="Shibahara T."/>
            <person name="Tanaka T."/>
            <person name="Ishii S."/>
            <person name="Yamamoto J."/>
            <person name="Saito K."/>
            <person name="Kawai Y."/>
            <person name="Isono Y."/>
            <person name="Nakamura Y."/>
            <person name="Nagahari K."/>
            <person name="Murakami K."/>
            <person name="Yasuda T."/>
            <person name="Iwayanagi T."/>
            <person name="Wagatsuma M."/>
            <person name="Shiratori A."/>
            <person name="Sudo H."/>
            <person name="Hosoiri T."/>
            <person name="Kaku Y."/>
            <person name="Kodaira H."/>
            <person name="Kondo H."/>
            <person name="Sugawara M."/>
            <person name="Takahashi M."/>
            <person name="Kanda K."/>
            <person name="Yokoi T."/>
            <person name="Furuya T."/>
            <person name="Kikkawa E."/>
            <person name="Omura Y."/>
            <person name="Abe K."/>
            <person name="Kamihara K."/>
            <person name="Katsuta N."/>
            <person name="Sato K."/>
            <person name="Tanikawa M."/>
            <person name="Yamazaki M."/>
            <person name="Ninomiya K."/>
            <person name="Ishibashi T."/>
            <person name="Yamashita H."/>
            <person name="Murakawa K."/>
            <person name="Fujimori K."/>
            <person name="Tanai H."/>
            <person name="Kimata M."/>
            <person name="Watanabe M."/>
            <person name="Hiraoka S."/>
            <person name="Chiba Y."/>
            <person name="Ishida S."/>
            <person name="Ono Y."/>
            <person name="Takiguchi S."/>
            <person name="Watanabe S."/>
            <person name="Yosida M."/>
            <person name="Hotuta T."/>
            <person name="Kusano J."/>
            <person name="Kanehori K."/>
            <person name="Takahashi-Fujii A."/>
            <person name="Hara H."/>
            <person name="Tanase T.-O."/>
            <person name="Nomura Y."/>
            <person name="Togiya S."/>
            <person name="Komai F."/>
            <person name="Hara R."/>
            <person name="Takeuchi K."/>
            <person name="Arita M."/>
            <person name="Imose N."/>
            <person name="Musashino K."/>
            <person name="Yuuki H."/>
            <person name="Oshima A."/>
            <person name="Sasaki N."/>
            <person name="Aotsuka S."/>
            <person name="Yoshikawa Y."/>
            <person name="Matsunawa H."/>
            <person name="Ichihara T."/>
            <person name="Shiohata N."/>
            <person name="Sano S."/>
            <person name="Moriya S."/>
            <person name="Momiyama H."/>
            <person name="Satoh N."/>
            <person name="Takami S."/>
            <person name="Terashima Y."/>
            <person name="Suzuki O."/>
            <person name="Nakagawa S."/>
            <person name="Senoh A."/>
            <person name="Mizoguchi H."/>
            <person name="Goto Y."/>
            <person name="Shimizu F."/>
            <person name="Wakebe H."/>
            <person name="Hishigaki H."/>
            <person name="Watanabe T."/>
            <person name="Sugiyama A."/>
            <person name="Takemoto M."/>
            <person name="Kawakami B."/>
            <person name="Yamazaki M."/>
            <person name="Watanabe K."/>
            <person name="Kumagai A."/>
            <person name="Itakura S."/>
            <person name="Fukuzumi Y."/>
            <person name="Fujimori Y."/>
            <person name="Komiyama M."/>
            <person name="Tashiro H."/>
            <person name="Tanigami A."/>
            <person name="Fujiwara T."/>
            <person name="Ono T."/>
            <person name="Yamada K."/>
            <person name="Fujii Y."/>
            <person name="Ozaki K."/>
            <person name="Hirao M."/>
            <person name="Ohmori Y."/>
            <person name="Kawabata A."/>
            <person name="Hikiji T."/>
            <person name="Kobatake N."/>
            <person name="Inagaki H."/>
            <person name="Ikema Y."/>
            <person name="Okamoto S."/>
            <person name="Okitani R."/>
            <person name="Kawakami T."/>
            <person name="Noguchi S."/>
            <person name="Itoh T."/>
            <person name="Shigeta K."/>
            <person name="Senba T."/>
            <person name="Matsumura K."/>
            <person name="Nakajima Y."/>
            <person name="Mizuno T."/>
            <person name="Morinaga M."/>
            <person name="Sasaki M."/>
            <person name="Togashi T."/>
            <person name="Oyama M."/>
            <person name="Hata H."/>
            <person name="Watanabe M."/>
            <person name="Komatsu T."/>
            <person name="Mizushima-Sugano J."/>
            <person name="Satoh T."/>
            <person name="Shirai Y."/>
            <person name="Takahashi Y."/>
            <person name="Nakagawa K."/>
            <person name="Okumura K."/>
            <person name="Nagase T."/>
            <person name="Nomura N."/>
            <person name="Kikuchi H."/>
            <person name="Masuho Y."/>
            <person name="Yamashita R."/>
            <person name="Nakai K."/>
            <person name="Yada T."/>
            <person name="Nakamura Y."/>
            <person name="Ohara O."/>
            <person name="Isogai T."/>
            <person name="Sugano S."/>
        </authorList>
    </citation>
    <scope>NUCLEOTIDE SEQUENCE [LARGE SCALE MRNA] (ISOFORM 3)</scope>
    <source>
        <tissue>Brain</tissue>
    </source>
</reference>
<reference key="4">
    <citation type="journal article" date="2005" name="DNA Res.">
        <title>Signal sequence and keyword trap in silico for selection of full-length human cDNAs encoding secretion or membrane proteins from oligo-capped cDNA libraries.</title>
        <authorList>
            <person name="Otsuki T."/>
            <person name="Ota T."/>
            <person name="Nishikawa T."/>
            <person name="Hayashi K."/>
            <person name="Suzuki Y."/>
            <person name="Yamamoto J."/>
            <person name="Wakamatsu A."/>
            <person name="Kimura K."/>
            <person name="Sakamoto K."/>
            <person name="Hatano N."/>
            <person name="Kawai Y."/>
            <person name="Ishii S."/>
            <person name="Saito K."/>
            <person name="Kojima S."/>
            <person name="Sugiyama T."/>
            <person name="Ono T."/>
            <person name="Okano K."/>
            <person name="Yoshikawa Y."/>
            <person name="Aotsuka S."/>
            <person name="Sasaki N."/>
            <person name="Hattori A."/>
            <person name="Okumura K."/>
            <person name="Nagai K."/>
            <person name="Sugano S."/>
            <person name="Isogai T."/>
        </authorList>
    </citation>
    <scope>NUCLEOTIDE SEQUENCE [LARGE SCALE MRNA] (ISOFORM 2)</scope>
    <source>
        <tissue>Placenta</tissue>
    </source>
</reference>
<reference key="5">
    <citation type="journal article" date="2006" name="Nature">
        <title>DNA sequence of human chromosome 17 and analysis of rearrangement in the human lineage.</title>
        <authorList>
            <person name="Zody M.C."/>
            <person name="Garber M."/>
            <person name="Adams D.J."/>
            <person name="Sharpe T."/>
            <person name="Harrow J."/>
            <person name="Lupski J.R."/>
            <person name="Nicholson C."/>
            <person name="Searle S.M."/>
            <person name="Wilming L."/>
            <person name="Young S.K."/>
            <person name="Abouelleil A."/>
            <person name="Allen N.R."/>
            <person name="Bi W."/>
            <person name="Bloom T."/>
            <person name="Borowsky M.L."/>
            <person name="Bugalter B.E."/>
            <person name="Butler J."/>
            <person name="Chang J.L."/>
            <person name="Chen C.-K."/>
            <person name="Cook A."/>
            <person name="Corum B."/>
            <person name="Cuomo C.A."/>
            <person name="de Jong P.J."/>
            <person name="DeCaprio D."/>
            <person name="Dewar K."/>
            <person name="FitzGerald M."/>
            <person name="Gilbert J."/>
            <person name="Gibson R."/>
            <person name="Gnerre S."/>
            <person name="Goldstein S."/>
            <person name="Grafham D.V."/>
            <person name="Grocock R."/>
            <person name="Hafez N."/>
            <person name="Hagopian D.S."/>
            <person name="Hart E."/>
            <person name="Norman C.H."/>
            <person name="Humphray S."/>
            <person name="Jaffe D.B."/>
            <person name="Jones M."/>
            <person name="Kamal M."/>
            <person name="Khodiyar V.K."/>
            <person name="LaButti K."/>
            <person name="Laird G."/>
            <person name="Lehoczky J."/>
            <person name="Liu X."/>
            <person name="Lokyitsang T."/>
            <person name="Loveland J."/>
            <person name="Lui A."/>
            <person name="Macdonald P."/>
            <person name="Major J.E."/>
            <person name="Matthews L."/>
            <person name="Mauceli E."/>
            <person name="McCarroll S.A."/>
            <person name="Mihalev A.H."/>
            <person name="Mudge J."/>
            <person name="Nguyen C."/>
            <person name="Nicol R."/>
            <person name="O'Leary S.B."/>
            <person name="Osoegawa K."/>
            <person name="Schwartz D.C."/>
            <person name="Shaw-Smith C."/>
            <person name="Stankiewicz P."/>
            <person name="Steward C."/>
            <person name="Swarbreck D."/>
            <person name="Venkataraman V."/>
            <person name="Whittaker C.A."/>
            <person name="Yang X."/>
            <person name="Zimmer A.R."/>
            <person name="Bradley A."/>
            <person name="Hubbard T."/>
            <person name="Birren B.W."/>
            <person name="Rogers J."/>
            <person name="Lander E.S."/>
            <person name="Nusbaum C."/>
        </authorList>
    </citation>
    <scope>NUCLEOTIDE SEQUENCE [LARGE SCALE GENOMIC DNA]</scope>
</reference>
<reference key="6">
    <citation type="submission" date="2005-07" db="EMBL/GenBank/DDBJ databases">
        <authorList>
            <person name="Mural R.J."/>
            <person name="Istrail S."/>
            <person name="Sutton G.G."/>
            <person name="Florea L."/>
            <person name="Halpern A.L."/>
            <person name="Mobarry C.M."/>
            <person name="Lippert R."/>
            <person name="Walenz B."/>
            <person name="Shatkay H."/>
            <person name="Dew I."/>
            <person name="Miller J.R."/>
            <person name="Flanigan M.J."/>
            <person name="Edwards N.J."/>
            <person name="Bolanos R."/>
            <person name="Fasulo D."/>
            <person name="Halldorsson B.V."/>
            <person name="Hannenhalli S."/>
            <person name="Turner R."/>
            <person name="Yooseph S."/>
            <person name="Lu F."/>
            <person name="Nusskern D.R."/>
            <person name="Shue B.C."/>
            <person name="Zheng X.H."/>
            <person name="Zhong F."/>
            <person name="Delcher A.L."/>
            <person name="Huson D.H."/>
            <person name="Kravitz S.A."/>
            <person name="Mouchard L."/>
            <person name="Reinert K."/>
            <person name="Remington K.A."/>
            <person name="Clark A.G."/>
            <person name="Waterman M.S."/>
            <person name="Eichler E.E."/>
            <person name="Adams M.D."/>
            <person name="Hunkapiller M.W."/>
            <person name="Myers E.W."/>
            <person name="Venter J.C."/>
        </authorList>
    </citation>
    <scope>NUCLEOTIDE SEQUENCE [LARGE SCALE GENOMIC DNA]</scope>
</reference>
<reference key="7">
    <citation type="journal article" date="2004" name="Genome Res.">
        <title>The status, quality, and expansion of the NIH full-length cDNA project: the Mammalian Gene Collection (MGC).</title>
        <authorList>
            <consortium name="The MGC Project Team"/>
        </authorList>
    </citation>
    <scope>NUCLEOTIDE SEQUENCE [LARGE SCALE MRNA] (ISOFORM 1)</scope>
    <source>
        <tissue>Colon</tissue>
    </source>
</reference>
<reference key="8">
    <citation type="journal article" date="2003" name="Int. J. Oncol.">
        <title>MGC9753 gene, located within PPP1R1B-STARD3-ERBB2-GRB7 amplicon on human chromosome 17q12, encodes the seven-transmembrane receptor with extracellular six-cysteine domain.</title>
        <authorList>
            <person name="Katoh M."/>
            <person name="Katoh M."/>
        </authorList>
    </citation>
    <scope>IDENTIFICATION</scope>
</reference>
<reference key="9">
    <citation type="journal article" date="2006" name="Mol. Biol. Cell">
        <title>PER1 is required for GPI-phospholipase A2 activity and involved in lipid remodeling of GPI-anchored proteins.</title>
        <authorList>
            <person name="Fujita M."/>
            <person name="Umemura M."/>
            <person name="Yoko-o T."/>
            <person name="Jigami Y."/>
        </authorList>
    </citation>
    <scope>FUNCTION</scope>
</reference>
<reference key="10">
    <citation type="journal article" date="2014" name="Am. J. Hum. Genet.">
        <title>Mutations in PGAP3 impair GPI-anchor maturation, causing a subtype of hyperphosphatasia with mental retardation.</title>
        <authorList>
            <person name="Howard M.F."/>
            <person name="Murakami Y."/>
            <person name="Pagnamenta A.T."/>
            <person name="Daumer-Haas C."/>
            <person name="Fischer B."/>
            <person name="Hecht J."/>
            <person name="Keays D.A."/>
            <person name="Knight S.J."/>
            <person name="Kolsch U."/>
            <person name="Kruger U."/>
            <person name="Leiz S."/>
            <person name="Maeda Y."/>
            <person name="Mitchell D."/>
            <person name="Mundlos S."/>
            <person name="Phillips J.A."/>
            <person name="Robinson P.N."/>
            <person name="Kini U."/>
            <person name="Taylor J.C."/>
            <person name="Horn D."/>
            <person name="Kinoshita T."/>
            <person name="Krawitz P.M."/>
        </authorList>
    </citation>
    <scope>VARIANTS HPMRS4 ASP-92; ARG-105 AND GLY-305</scope>
    <scope>CHARACTERIZATION OF VARIANTS HPMRS4 ASP-92; ARG-105 AND GLY-305</scope>
    <scope>SUBCELLULAR LOCATION</scope>
    <scope>FUNCTION</scope>
    <scope>CATALYTIC ACTIVITY</scope>
</reference>
<reference key="11">
    <citation type="journal article" date="2018" name="Genet. Med.">
        <title>Expanding the phenome and variome of skeletal dysplasia.</title>
        <authorList>
            <person name="Maddirevula S."/>
            <person name="Alsahli S."/>
            <person name="Alhabeeb L."/>
            <person name="Patel N."/>
            <person name="Alzahrani F."/>
            <person name="Shamseldin H.E."/>
            <person name="Anazi S."/>
            <person name="Ewida N."/>
            <person name="Alsaif H.S."/>
            <person name="Mohamed J.Y."/>
            <person name="Alazami A.M."/>
            <person name="Ibrahim N."/>
            <person name="Abdulwahab F."/>
            <person name="Hashem M."/>
            <person name="Abouelhoda M."/>
            <person name="Monies D."/>
            <person name="Al Tassan N."/>
            <person name="Alshammari M."/>
            <person name="Alsagheir A."/>
            <person name="Seidahmed M.Z."/>
            <person name="Sogati S."/>
            <person name="Aglan M.S."/>
            <person name="Hamad M.H."/>
            <person name="Salih M.A."/>
            <person name="Hamed A.A."/>
            <person name="Alhashmi N."/>
            <person name="Nabil A."/>
            <person name="Alfadli F."/>
            <person name="Abdel-Salam G.M.H."/>
            <person name="Alkuraya H."/>
            <person name="Peitee W.O."/>
            <person name="Keng W.T."/>
            <person name="Qasem A."/>
            <person name="Mushiba A.M."/>
            <person name="Zaki M.S."/>
            <person name="Fassad M.R."/>
            <person name="Alfadhel M."/>
            <person name="Alexander S."/>
            <person name="Sabr Y."/>
            <person name="Temtamy S."/>
            <person name="Ekbote A.V."/>
            <person name="Ismail S."/>
            <person name="Hosny G.A."/>
            <person name="Otaify G.A."/>
            <person name="Amr K."/>
            <person name="Al Tala S."/>
            <person name="Khan A.O."/>
            <person name="Rizk T."/>
            <person name="Alaqeel A."/>
            <person name="Alsiddiky A."/>
            <person name="Singh A."/>
            <person name="Kapoor S."/>
            <person name="Alhashem A."/>
            <person name="Faqeih E."/>
            <person name="Shaheen R."/>
            <person name="Alkuraya F.S."/>
        </authorList>
    </citation>
    <scope>VARIANT TYR-284</scope>
</reference>
<evidence type="ECO:0000250" key="1">
    <source>
        <dbReference type="UniProtKB" id="A2V7M9"/>
    </source>
</evidence>
<evidence type="ECO:0000255" key="2"/>
<evidence type="ECO:0000269" key="3">
    <source>
    </source>
</evidence>
<evidence type="ECO:0000269" key="4">
    <source>
    </source>
</evidence>
<evidence type="ECO:0000269" key="5">
    <source>
    </source>
</evidence>
<evidence type="ECO:0000269" key="6">
    <source>
    </source>
</evidence>
<evidence type="ECO:0000303" key="7">
    <source>
    </source>
</evidence>
<evidence type="ECO:0000303" key="8">
    <source>
    </source>
</evidence>
<evidence type="ECO:0000305" key="9"/>
<evidence type="ECO:0000305" key="10">
    <source>
    </source>
</evidence>
<evidence type="ECO:0000305" key="11">
    <source>
    </source>
</evidence>
<evidence type="ECO:0000305" key="12">
    <source>
    </source>
</evidence>
<evidence type="ECO:0000312" key="13">
    <source>
        <dbReference type="HGNC" id="HGNC:23719"/>
    </source>
</evidence>
<protein>
    <recommendedName>
        <fullName evidence="9">GPI-specific phospholipase A2-like PGAP3</fullName>
        <ecNumber evidence="12">3.1.1.-</ecNumber>
    </recommendedName>
    <alternativeName>
        <fullName>COS16 homolog</fullName>
        <shortName>hCOS16</shortName>
    </alternativeName>
    <alternativeName>
        <fullName>Gene coamplified with ERBB2 protein</fullName>
    </alternativeName>
    <alternativeName>
        <fullName>PER1-like domain-containing protein 1</fullName>
    </alternativeName>
    <alternativeName>
        <fullName>Post-GPI attachment to proteins factor 3</fullName>
    </alternativeName>
</protein>
<comment type="function">
    <text evidence="1 4 5 12">Involved in the fatty acid remodeling steps of GPI-anchor maturation where the unsaturated acyl chain at sn-2 of inositol phosphate is replaced by a saturated stearoyl chain (PubMed:17021251, PubMed:24439110). May catalyze the first step of the fatty acid remodeling, by removing the unsaturated acyl chain at sn-2 of inositol phosphate, generating a lyso-GPI intermediate (Probable). The fatty acid remodeling steps is critical for the integration of GPI-APs into lipid rafts (By similarity).</text>
</comment>
<comment type="interaction">
    <interactant intactId="EBI-22113571">
        <id>Q96FM1</id>
    </interactant>
    <interactant intactId="EBI-1054873">
        <id>Q9Y5Q9</id>
        <label>GTF3C3</label>
    </interactant>
    <organismsDiffer>false</organismsDiffer>
    <experiments>3</experiments>
</comment>
<comment type="interaction">
    <interactant intactId="EBI-22113571">
        <id>Q96FM1</id>
    </interactant>
    <interactant intactId="EBI-702328">
        <id>Q969Z0</id>
        <label>TBRG4</label>
    </interactant>
    <organismsDiffer>false</organismsDiffer>
    <experiments>2</experiments>
</comment>
<comment type="subcellular location">
    <subcellularLocation>
        <location evidence="5 10">Golgi apparatus membrane</location>
        <topology evidence="2">Multi-pass membrane protein</topology>
    </subcellularLocation>
</comment>
<comment type="alternative products">
    <event type="alternative splicing"/>
    <isoform>
        <id>Q96FM1-1</id>
        <name>1</name>
        <sequence type="displayed"/>
    </isoform>
    <isoform>
        <id>Q96FM1-2</id>
        <name>2</name>
        <sequence type="described" ref="VSP_034158"/>
    </isoform>
    <isoform>
        <id>Q96FM1-3</id>
        <name>3</name>
        <sequence type="described" ref="VSP_057229"/>
    </isoform>
</comment>
<comment type="tissue specificity">
    <text evidence="3">Ubiquitously expressed, with highest levels in thyroid and placenta.</text>
</comment>
<comment type="disease" evidence="5">
    <disease id="DI-04049">
        <name>Hyperphosphatasia with impaired intellectual development syndrome 4</name>
        <acronym>HPMRS4</acronym>
        <description>An autosomal recessive neurologic disorder characterized by profound developmental delay, severe intellectual disability, no speech, psychomotor delay, postnatal microcephaly, and elevated serum alkaline phosphatase.</description>
        <dbReference type="MIM" id="615716"/>
    </disease>
    <text>The disease is caused by variants affecting the gene represented in this entry.</text>
</comment>
<comment type="miscellaneous">
    <text evidence="11">When transfected in S.cerevisiae, it can complement the absence of yeast of PER1 protein, suggesting a conserved role in lipid remodeling steps of GPI-anchor maturation.</text>
</comment>
<comment type="similarity">
    <text evidence="9">Belongs to the PGAP3 family.</text>
</comment>
<comment type="sequence caution" evidence="9">
    <conflict type="frameshift">
        <sequence resource="EMBL-CDS" id="BAC55580"/>
    </conflict>
</comment>
<keyword id="KW-0025">Alternative splicing</keyword>
<keyword id="KW-0225">Disease variant</keyword>
<keyword id="KW-0325">Glycoprotein</keyword>
<keyword id="KW-0333">Golgi apparatus</keyword>
<keyword id="KW-0337">GPI-anchor biosynthesis</keyword>
<keyword id="KW-0378">Hydrolase</keyword>
<keyword id="KW-0991">Intellectual disability</keyword>
<keyword id="KW-0472">Membrane</keyword>
<keyword id="KW-1267">Proteomics identification</keyword>
<keyword id="KW-1185">Reference proteome</keyword>
<keyword id="KW-0732">Signal</keyword>
<keyword id="KW-0812">Transmembrane</keyword>
<keyword id="KW-1133">Transmembrane helix</keyword>
<proteinExistence type="evidence at protein level"/>